<feature type="chain" id="PRO_0000142546" description="3'(2'),5'-bisphosphate nucleotidase CysQ">
    <location>
        <begin position="1"/>
        <end position="246"/>
    </location>
</feature>
<feature type="binding site" evidence="1">
    <location>
        <position position="64"/>
    </location>
    <ligand>
        <name>Mg(2+)</name>
        <dbReference type="ChEBI" id="CHEBI:18420"/>
        <label>1</label>
    </ligand>
</feature>
<feature type="binding site" evidence="1">
    <location>
        <position position="64"/>
    </location>
    <ligand>
        <name>substrate</name>
    </ligand>
</feature>
<feature type="binding site" evidence="1">
    <location>
        <position position="83"/>
    </location>
    <ligand>
        <name>Mg(2+)</name>
        <dbReference type="ChEBI" id="CHEBI:18420"/>
        <label>1</label>
    </ligand>
</feature>
<feature type="binding site" evidence="1">
    <location>
        <position position="83"/>
    </location>
    <ligand>
        <name>Mg(2+)</name>
        <dbReference type="ChEBI" id="CHEBI:18420"/>
        <label>2</label>
    </ligand>
</feature>
<feature type="binding site" evidence="1">
    <location>
        <begin position="85"/>
        <end position="88"/>
    </location>
    <ligand>
        <name>substrate</name>
    </ligand>
</feature>
<feature type="binding site" evidence="1">
    <location>
        <position position="85"/>
    </location>
    <ligand>
        <name>Mg(2+)</name>
        <dbReference type="ChEBI" id="CHEBI:18420"/>
        <label>1</label>
    </ligand>
</feature>
<feature type="binding site" evidence="1">
    <location>
        <position position="86"/>
    </location>
    <ligand>
        <name>Mg(2+)</name>
        <dbReference type="ChEBI" id="CHEBI:18420"/>
        <label>2</label>
    </ligand>
</feature>
<feature type="binding site" evidence="1">
    <location>
        <position position="205"/>
    </location>
    <ligand>
        <name>Mg(2+)</name>
        <dbReference type="ChEBI" id="CHEBI:18420"/>
        <label>2</label>
    </ligand>
</feature>
<feature type="binding site" evidence="1">
    <location>
        <position position="205"/>
    </location>
    <ligand>
        <name>substrate</name>
    </ligand>
</feature>
<organism>
    <name type="scientific">Shigella flexneri</name>
    <dbReference type="NCBI Taxonomy" id="623"/>
    <lineage>
        <taxon>Bacteria</taxon>
        <taxon>Pseudomonadati</taxon>
        <taxon>Pseudomonadota</taxon>
        <taxon>Gammaproteobacteria</taxon>
        <taxon>Enterobacterales</taxon>
        <taxon>Enterobacteriaceae</taxon>
        <taxon>Shigella</taxon>
    </lineage>
</organism>
<keyword id="KW-0997">Cell inner membrane</keyword>
<keyword id="KW-1003">Cell membrane</keyword>
<keyword id="KW-0378">Hydrolase</keyword>
<keyword id="KW-0460">Magnesium</keyword>
<keyword id="KW-0472">Membrane</keyword>
<keyword id="KW-0479">Metal-binding</keyword>
<keyword id="KW-1185">Reference proteome</keyword>
<dbReference type="EC" id="3.1.3.7" evidence="1"/>
<dbReference type="EMBL" id="AE005674">
    <property type="protein sequence ID" value="AAN45690.1"/>
    <property type="molecule type" value="Genomic_DNA"/>
</dbReference>
<dbReference type="EMBL" id="AE014073">
    <property type="protein sequence ID" value="AAP19476.1"/>
    <property type="molecule type" value="Genomic_DNA"/>
</dbReference>
<dbReference type="RefSeq" id="NP_709983.1">
    <property type="nucleotide sequence ID" value="NC_004337.2"/>
</dbReference>
<dbReference type="RefSeq" id="WP_000886892.1">
    <property type="nucleotide sequence ID" value="NZ_WPGW01000133.1"/>
</dbReference>
<dbReference type="SMR" id="P59735"/>
<dbReference type="STRING" id="198214.SF4272"/>
<dbReference type="PaxDb" id="198214-SF4272"/>
<dbReference type="GeneID" id="1026559"/>
<dbReference type="KEGG" id="sfl:SF4272"/>
<dbReference type="KEGG" id="sfx:S4537"/>
<dbReference type="PATRIC" id="fig|198214.7.peg.5041"/>
<dbReference type="HOGENOM" id="CLU_044118_3_0_6"/>
<dbReference type="Proteomes" id="UP000001006">
    <property type="component" value="Chromosome"/>
</dbReference>
<dbReference type="Proteomes" id="UP000002673">
    <property type="component" value="Chromosome"/>
</dbReference>
<dbReference type="GO" id="GO:0005886">
    <property type="term" value="C:plasma membrane"/>
    <property type="evidence" value="ECO:0007669"/>
    <property type="project" value="UniProtKB-SubCell"/>
</dbReference>
<dbReference type="GO" id="GO:0008441">
    <property type="term" value="F:3'(2'),5'-bisphosphate nucleotidase activity"/>
    <property type="evidence" value="ECO:0007669"/>
    <property type="project" value="UniProtKB-UniRule"/>
</dbReference>
<dbReference type="GO" id="GO:0000287">
    <property type="term" value="F:magnesium ion binding"/>
    <property type="evidence" value="ECO:0007669"/>
    <property type="project" value="UniProtKB-UniRule"/>
</dbReference>
<dbReference type="GO" id="GO:0050427">
    <property type="term" value="P:3'-phosphoadenosine 5'-phosphosulfate metabolic process"/>
    <property type="evidence" value="ECO:0007669"/>
    <property type="project" value="TreeGrafter"/>
</dbReference>
<dbReference type="GO" id="GO:0046854">
    <property type="term" value="P:phosphatidylinositol phosphate biosynthetic process"/>
    <property type="evidence" value="ECO:0007669"/>
    <property type="project" value="InterPro"/>
</dbReference>
<dbReference type="GO" id="GO:0000103">
    <property type="term" value="P:sulfate assimilation"/>
    <property type="evidence" value="ECO:0007669"/>
    <property type="project" value="TreeGrafter"/>
</dbReference>
<dbReference type="CDD" id="cd01638">
    <property type="entry name" value="CysQ"/>
    <property type="match status" value="1"/>
</dbReference>
<dbReference type="FunFam" id="3.30.540.10:FF:000007">
    <property type="entry name" value="3'(2'),5'-bisphosphate nucleotidase CysQ"/>
    <property type="match status" value="1"/>
</dbReference>
<dbReference type="FunFam" id="3.40.190.80:FF:000005">
    <property type="entry name" value="3'(2'),5'-bisphosphate nucleotidase CysQ"/>
    <property type="match status" value="1"/>
</dbReference>
<dbReference type="Gene3D" id="3.40.190.80">
    <property type="match status" value="1"/>
</dbReference>
<dbReference type="Gene3D" id="3.30.540.10">
    <property type="entry name" value="Fructose-1,6-Bisphosphatase, subunit A, domain 1"/>
    <property type="match status" value="1"/>
</dbReference>
<dbReference type="HAMAP" id="MF_02095">
    <property type="entry name" value="CysQ"/>
    <property type="match status" value="1"/>
</dbReference>
<dbReference type="InterPro" id="IPR006240">
    <property type="entry name" value="CysQ"/>
</dbReference>
<dbReference type="InterPro" id="IPR050725">
    <property type="entry name" value="CysQ/Inositol_MonoPase"/>
</dbReference>
<dbReference type="InterPro" id="IPR020583">
    <property type="entry name" value="Inositol_monoP_metal-BS"/>
</dbReference>
<dbReference type="InterPro" id="IPR000760">
    <property type="entry name" value="Inositol_monophosphatase-like"/>
</dbReference>
<dbReference type="InterPro" id="IPR020550">
    <property type="entry name" value="Inositol_monophosphatase_CS"/>
</dbReference>
<dbReference type="NCBIfam" id="TIGR01331">
    <property type="entry name" value="bisphos_cysQ"/>
    <property type="match status" value="1"/>
</dbReference>
<dbReference type="NCBIfam" id="NF008182">
    <property type="entry name" value="PRK10931.1"/>
    <property type="match status" value="1"/>
</dbReference>
<dbReference type="PANTHER" id="PTHR43028">
    <property type="entry name" value="3'(2'),5'-BISPHOSPHATE NUCLEOTIDASE 1"/>
    <property type="match status" value="1"/>
</dbReference>
<dbReference type="PANTHER" id="PTHR43028:SF5">
    <property type="entry name" value="3'(2'),5'-BISPHOSPHATE NUCLEOTIDASE 1"/>
    <property type="match status" value="1"/>
</dbReference>
<dbReference type="Pfam" id="PF00459">
    <property type="entry name" value="Inositol_P"/>
    <property type="match status" value="1"/>
</dbReference>
<dbReference type="SUPFAM" id="SSF56655">
    <property type="entry name" value="Carbohydrate phosphatase"/>
    <property type="match status" value="1"/>
</dbReference>
<dbReference type="PROSITE" id="PS00629">
    <property type="entry name" value="IMP_1"/>
    <property type="match status" value="1"/>
</dbReference>
<dbReference type="PROSITE" id="PS00630">
    <property type="entry name" value="IMP_2"/>
    <property type="match status" value="1"/>
</dbReference>
<protein>
    <recommendedName>
        <fullName evidence="1">3'(2'),5'-bisphosphate nucleotidase CysQ</fullName>
        <ecNumber evidence="1">3.1.3.7</ecNumber>
    </recommendedName>
    <alternativeName>
        <fullName evidence="1">3'(2'),5-bisphosphonucleoside 3'(2')-phosphohydrolase</fullName>
    </alternativeName>
    <alternativeName>
        <fullName evidence="1">3'-phosphoadenosine 5'-phosphate phosphatase</fullName>
        <shortName evidence="1">PAP phosphatase</shortName>
    </alternativeName>
</protein>
<proteinExistence type="inferred from homology"/>
<gene>
    <name evidence="1" type="primary">cysQ</name>
    <name type="ordered locus">SF4272</name>
    <name type="ordered locus">S4537</name>
</gene>
<reference key="1">
    <citation type="journal article" date="2002" name="Nucleic Acids Res.">
        <title>Genome sequence of Shigella flexneri 2a: insights into pathogenicity through comparison with genomes of Escherichia coli K12 and O157.</title>
        <authorList>
            <person name="Jin Q."/>
            <person name="Yuan Z."/>
            <person name="Xu J."/>
            <person name="Wang Y."/>
            <person name="Shen Y."/>
            <person name="Lu W."/>
            <person name="Wang J."/>
            <person name="Liu H."/>
            <person name="Yang J."/>
            <person name="Yang F."/>
            <person name="Zhang X."/>
            <person name="Zhang J."/>
            <person name="Yang G."/>
            <person name="Wu H."/>
            <person name="Qu D."/>
            <person name="Dong J."/>
            <person name="Sun L."/>
            <person name="Xue Y."/>
            <person name="Zhao A."/>
            <person name="Gao Y."/>
            <person name="Zhu J."/>
            <person name="Kan B."/>
            <person name="Ding K."/>
            <person name="Chen S."/>
            <person name="Cheng H."/>
            <person name="Yao Z."/>
            <person name="He B."/>
            <person name="Chen R."/>
            <person name="Ma D."/>
            <person name="Qiang B."/>
            <person name="Wen Y."/>
            <person name="Hou Y."/>
            <person name="Yu J."/>
        </authorList>
    </citation>
    <scope>NUCLEOTIDE SEQUENCE [LARGE SCALE GENOMIC DNA]</scope>
    <source>
        <strain>301 / Serotype 2a</strain>
    </source>
</reference>
<reference key="2">
    <citation type="journal article" date="2003" name="Infect. Immun.">
        <title>Complete genome sequence and comparative genomics of Shigella flexneri serotype 2a strain 2457T.</title>
        <authorList>
            <person name="Wei J."/>
            <person name="Goldberg M.B."/>
            <person name="Burland V."/>
            <person name="Venkatesan M.M."/>
            <person name="Deng W."/>
            <person name="Fournier G."/>
            <person name="Mayhew G.F."/>
            <person name="Plunkett G. III"/>
            <person name="Rose D.J."/>
            <person name="Darling A."/>
            <person name="Mau B."/>
            <person name="Perna N.T."/>
            <person name="Payne S.M."/>
            <person name="Runyen-Janecky L.J."/>
            <person name="Zhou S."/>
            <person name="Schwartz D.C."/>
            <person name="Blattner F.R."/>
        </authorList>
    </citation>
    <scope>NUCLEOTIDE SEQUENCE [LARGE SCALE GENOMIC DNA]</scope>
    <source>
        <strain>ATCC 700930 / 2457T / Serotype 2a</strain>
    </source>
</reference>
<evidence type="ECO:0000255" key="1">
    <source>
        <dbReference type="HAMAP-Rule" id="MF_02095"/>
    </source>
</evidence>
<evidence type="ECO:0000305" key="2"/>
<accession>P59735</accession>
<comment type="function">
    <text evidence="1">Converts adenosine-3',5'-bisphosphate (PAP) to AMP.</text>
</comment>
<comment type="catalytic activity">
    <reaction evidence="1">
        <text>adenosine 3',5'-bisphosphate + H2O = AMP + phosphate</text>
        <dbReference type="Rhea" id="RHEA:10040"/>
        <dbReference type="ChEBI" id="CHEBI:15377"/>
        <dbReference type="ChEBI" id="CHEBI:43474"/>
        <dbReference type="ChEBI" id="CHEBI:58343"/>
        <dbReference type="ChEBI" id="CHEBI:456215"/>
        <dbReference type="EC" id="3.1.3.7"/>
    </reaction>
</comment>
<comment type="cofactor">
    <cofactor evidence="1">
        <name>Mg(2+)</name>
        <dbReference type="ChEBI" id="CHEBI:18420"/>
    </cofactor>
</comment>
<comment type="subcellular location">
    <subcellularLocation>
        <location evidence="1">Cell inner membrane</location>
        <topology evidence="1">Peripheral membrane protein</topology>
        <orientation evidence="1">Cytoplasmic side</orientation>
    </subcellularLocation>
</comment>
<comment type="similarity">
    <text evidence="1 2">Belongs to the inositol monophosphatase superfamily. CysQ family.</text>
</comment>
<name>CYSQ_SHIFL</name>
<sequence length="246" mass="27145">MLDQVCQLARNAGDAIMQVYDGTKPMDVVSKADNSPVTAADIAAHTVIMDGLRTLAPDIPVLSEEDPPGWEVRQHWQRYWLVDPLDGTKEFIKRNGEFTVNIALIDHGKPILGVVYAPVMNVMYSAAEGKAWKEECGVRKLIQVRDARPPLVVISRSHADAELKEYLQQLGEHQTTSIGSSLKFCLVAEGQAQLYPRFGPTNIWDTAAGHAVAAAAGAHVHDWQGKPLDYTPRESFLNPGFRVSIY</sequence>